<gene>
    <name evidence="3" type="primary">ETP2</name>
    <name evidence="4" type="ordered locus">At3g18910</name>
    <name evidence="5" type="ORF">K13E13.1</name>
</gene>
<reference key="1">
    <citation type="journal article" date="2000" name="DNA Res.">
        <title>Structural analysis of Arabidopsis thaliana chromosome 3. II. Sequence features of the 4,251,695 bp regions covered by 90 P1, TAC and BAC clones.</title>
        <authorList>
            <person name="Kaneko T."/>
            <person name="Katoh T."/>
            <person name="Sato S."/>
            <person name="Nakamura Y."/>
            <person name="Asamizu E."/>
            <person name="Tabata S."/>
        </authorList>
    </citation>
    <scope>NUCLEOTIDE SEQUENCE [LARGE SCALE GENOMIC DNA]</scope>
    <source>
        <strain>cv. Columbia</strain>
    </source>
</reference>
<reference key="2">
    <citation type="journal article" date="2017" name="Plant J.">
        <title>Araport11: a complete reannotation of the Arabidopsis thaliana reference genome.</title>
        <authorList>
            <person name="Cheng C.Y."/>
            <person name="Krishnakumar V."/>
            <person name="Chan A.P."/>
            <person name="Thibaud-Nissen F."/>
            <person name="Schobel S."/>
            <person name="Town C.D."/>
        </authorList>
    </citation>
    <scope>GENOME REANNOTATION</scope>
    <source>
        <strain>cv. Columbia</strain>
    </source>
</reference>
<reference key="3">
    <citation type="submission" date="2004-04" db="EMBL/GenBank/DDBJ databases">
        <title>Arabidopsis ORF clones.</title>
        <authorList>
            <person name="Kim C.J."/>
            <person name="Chen H."/>
            <person name="Cheuk R.F."/>
            <person name="Shinn P."/>
            <person name="Carninci P."/>
            <person name="Hayashizaki Y."/>
            <person name="Ishida J."/>
            <person name="Kamiya A."/>
            <person name="Kawai J."/>
            <person name="Narusaka M."/>
            <person name="Sakurai T."/>
            <person name="Satou M."/>
            <person name="Seki M."/>
            <person name="Shinozaki K."/>
            <person name="Ecker J.R."/>
        </authorList>
    </citation>
    <scope>NUCLEOTIDE SEQUENCE [LARGE SCALE MRNA]</scope>
    <source>
        <strain>cv. Columbia</strain>
    </source>
</reference>
<reference key="4">
    <citation type="submission" date="2004-09" db="EMBL/GenBank/DDBJ databases">
        <title>Large-scale analysis of RIKEN Arabidopsis full-length (RAFL) cDNAs.</title>
        <authorList>
            <person name="Totoki Y."/>
            <person name="Seki M."/>
            <person name="Ishida J."/>
            <person name="Nakajima M."/>
            <person name="Enju A."/>
            <person name="Kamiya A."/>
            <person name="Narusaka M."/>
            <person name="Shin-i T."/>
            <person name="Nakagawa M."/>
            <person name="Sakamoto N."/>
            <person name="Oishi K."/>
            <person name="Kohara Y."/>
            <person name="Kobayashi M."/>
            <person name="Toyoda A."/>
            <person name="Sakaki Y."/>
            <person name="Sakurai T."/>
            <person name="Iida K."/>
            <person name="Akiyama K."/>
            <person name="Satou M."/>
            <person name="Toyoda T."/>
            <person name="Konagaya A."/>
            <person name="Carninci P."/>
            <person name="Kawai J."/>
            <person name="Hayashizaki Y."/>
            <person name="Shinozaki K."/>
        </authorList>
    </citation>
    <scope>NUCLEOTIDE SEQUENCE [LARGE SCALE MRNA]</scope>
    <source>
        <strain>cv. Columbia</strain>
    </source>
</reference>
<reference key="5">
    <citation type="journal article" date="2009" name="Genes Dev.">
        <title>Interplay between ethylene, ETP1/ETP2 F-box proteins, and degradation of EIN2 triggers ethylene responses in Arabidopsis.</title>
        <authorList>
            <person name="Qiao H."/>
            <person name="Chang K.N."/>
            <person name="Yazaki J."/>
            <person name="Ecker J.R."/>
        </authorList>
    </citation>
    <scope>FUNCTION</scope>
    <scope>INTERACTION WITH EIN2</scope>
    <scope>DISRUPTION PHENOTYPE</scope>
    <scope>INDUCTION BY ETHYLENE</scope>
</reference>
<organism>
    <name type="scientific">Arabidopsis thaliana</name>
    <name type="common">Mouse-ear cress</name>
    <dbReference type="NCBI Taxonomy" id="3702"/>
    <lineage>
        <taxon>Eukaryota</taxon>
        <taxon>Viridiplantae</taxon>
        <taxon>Streptophyta</taxon>
        <taxon>Embryophyta</taxon>
        <taxon>Tracheophyta</taxon>
        <taxon>Spermatophyta</taxon>
        <taxon>Magnoliopsida</taxon>
        <taxon>eudicotyledons</taxon>
        <taxon>Gunneridae</taxon>
        <taxon>Pentapetalae</taxon>
        <taxon>rosids</taxon>
        <taxon>malvids</taxon>
        <taxon>Brassicales</taxon>
        <taxon>Brassicaceae</taxon>
        <taxon>Camelineae</taxon>
        <taxon>Arabidopsis</taxon>
    </lineage>
</organism>
<feature type="chain" id="PRO_0000283431" description="F-box protein ETP2">
    <location>
        <begin position="1"/>
        <end position="388"/>
    </location>
</feature>
<feature type="domain" description="F-box" evidence="1">
    <location>
        <begin position="2"/>
        <end position="48"/>
    </location>
</feature>
<dbReference type="EMBL" id="AP000735">
    <property type="protein sequence ID" value="BAB01688.1"/>
    <property type="molecule type" value="Genomic_DNA"/>
</dbReference>
<dbReference type="EMBL" id="CP002686">
    <property type="protein sequence ID" value="AEE76168.1"/>
    <property type="molecule type" value="Genomic_DNA"/>
</dbReference>
<dbReference type="EMBL" id="BT012550">
    <property type="protein sequence ID" value="AAS99694.1"/>
    <property type="molecule type" value="mRNA"/>
</dbReference>
<dbReference type="EMBL" id="AK175224">
    <property type="protein sequence ID" value="BAD42987.1"/>
    <property type="molecule type" value="mRNA"/>
</dbReference>
<dbReference type="RefSeq" id="NP_188521.1">
    <property type="nucleotide sequence ID" value="NM_112777.4"/>
</dbReference>
<dbReference type="SMR" id="Q9LJ74"/>
<dbReference type="BioGRID" id="6757">
    <property type="interactions" value="1"/>
</dbReference>
<dbReference type="FunCoup" id="Q9LJ74">
    <property type="interactions" value="461"/>
</dbReference>
<dbReference type="IntAct" id="Q9LJ74">
    <property type="interactions" value="1"/>
</dbReference>
<dbReference type="STRING" id="3702.Q9LJ74"/>
<dbReference type="iPTMnet" id="Q9LJ74"/>
<dbReference type="PaxDb" id="3702-AT3G18910.1"/>
<dbReference type="ProteomicsDB" id="230879"/>
<dbReference type="DNASU" id="821424"/>
<dbReference type="EnsemblPlants" id="AT3G18910.1">
    <property type="protein sequence ID" value="AT3G18910.1"/>
    <property type="gene ID" value="AT3G18910"/>
</dbReference>
<dbReference type="GeneID" id="821424"/>
<dbReference type="Gramene" id="AT3G18910.1">
    <property type="protein sequence ID" value="AT3G18910.1"/>
    <property type="gene ID" value="AT3G18910"/>
</dbReference>
<dbReference type="KEGG" id="ath:AT3G18910"/>
<dbReference type="Araport" id="AT3G18910"/>
<dbReference type="TAIR" id="AT3G18910">
    <property type="gene designation" value="ETP2"/>
</dbReference>
<dbReference type="HOGENOM" id="CLU_034692_0_0_1"/>
<dbReference type="InParanoid" id="Q9LJ74"/>
<dbReference type="OMA" id="CCERWID"/>
<dbReference type="PhylomeDB" id="Q9LJ74"/>
<dbReference type="PRO" id="PR:Q9LJ74"/>
<dbReference type="Proteomes" id="UP000006548">
    <property type="component" value="Chromosome 3"/>
</dbReference>
<dbReference type="ExpressionAtlas" id="Q9LJ74">
    <property type="expression patterns" value="baseline and differential"/>
</dbReference>
<dbReference type="CDD" id="cd22157">
    <property type="entry name" value="F-box_AtFBW1-like"/>
    <property type="match status" value="1"/>
</dbReference>
<dbReference type="Gene3D" id="1.20.1280.50">
    <property type="match status" value="1"/>
</dbReference>
<dbReference type="InterPro" id="IPR006527">
    <property type="entry name" value="F-box-assoc_dom_typ1"/>
</dbReference>
<dbReference type="InterPro" id="IPR017451">
    <property type="entry name" value="F-box-assoc_interact_dom"/>
</dbReference>
<dbReference type="InterPro" id="IPR036047">
    <property type="entry name" value="F-box-like_dom_sf"/>
</dbReference>
<dbReference type="InterPro" id="IPR001810">
    <property type="entry name" value="F-box_dom"/>
</dbReference>
<dbReference type="InterPro" id="IPR011043">
    <property type="entry name" value="Gal_Oxase/kelch_b-propeller"/>
</dbReference>
<dbReference type="InterPro" id="IPR050796">
    <property type="entry name" value="SCF_F-box_component"/>
</dbReference>
<dbReference type="NCBIfam" id="TIGR01640">
    <property type="entry name" value="F_box_assoc_1"/>
    <property type="match status" value="1"/>
</dbReference>
<dbReference type="PANTHER" id="PTHR31672">
    <property type="entry name" value="BNACNNG10540D PROTEIN"/>
    <property type="match status" value="1"/>
</dbReference>
<dbReference type="PANTHER" id="PTHR31672:SF13">
    <property type="entry name" value="F-BOX PROTEIN CPR30-LIKE"/>
    <property type="match status" value="1"/>
</dbReference>
<dbReference type="Pfam" id="PF00646">
    <property type="entry name" value="F-box"/>
    <property type="match status" value="1"/>
</dbReference>
<dbReference type="Pfam" id="PF07734">
    <property type="entry name" value="FBA_1"/>
    <property type="match status" value="1"/>
</dbReference>
<dbReference type="SMART" id="SM00256">
    <property type="entry name" value="FBOX"/>
    <property type="match status" value="1"/>
</dbReference>
<dbReference type="SUPFAM" id="SSF81383">
    <property type="entry name" value="F-box domain"/>
    <property type="match status" value="1"/>
</dbReference>
<dbReference type="SUPFAM" id="SSF50965">
    <property type="entry name" value="Galactose oxidase, central domain"/>
    <property type="match status" value="1"/>
</dbReference>
<dbReference type="PROSITE" id="PS50181">
    <property type="entry name" value="FBOX"/>
    <property type="match status" value="1"/>
</dbReference>
<proteinExistence type="evidence at protein level"/>
<comment type="function">
    <text evidence="2">Negative regulator of EIN2 protein stability.</text>
</comment>
<comment type="subunit">
    <text evidence="2">Interacts with EIN2 (via C-terminus).</text>
</comment>
<comment type="interaction">
    <interactant intactId="EBI-2437385">
        <id>Q9LJ74</id>
    </interactant>
    <interactant intactId="EBI-2437287">
        <id>Q9S814</id>
        <label>EIN2</label>
    </interactant>
    <organismsDiffer>false</organismsDiffer>
    <experiments>2</experiments>
</comment>
<comment type="induction">
    <text evidence="2">Ethylene treatment has no effect on RNA, but down-regulates the protein levels.</text>
</comment>
<comment type="disruption phenotype">
    <text evidence="2">No visible phenotype, probably due to the redundancy with ETP1.</text>
</comment>
<comment type="miscellaneous">
    <text evidence="2">Double knock-down mutants of ETP1 and ETP2 show an accumulation of EIN2 protein and a constitutive ethylene response.</text>
</comment>
<protein>
    <recommendedName>
        <fullName evidence="3">F-box protein ETP2</fullName>
    </recommendedName>
    <alternativeName>
        <fullName evidence="3">EIN2 targeting protein 2</fullName>
    </alternativeName>
</protein>
<name>FB161_ARATH</name>
<evidence type="ECO:0000255" key="1">
    <source>
        <dbReference type="PROSITE-ProRule" id="PRU00080"/>
    </source>
</evidence>
<evidence type="ECO:0000269" key="2">
    <source>
    </source>
</evidence>
<evidence type="ECO:0000303" key="3">
    <source>
    </source>
</evidence>
<evidence type="ECO:0000312" key="4">
    <source>
        <dbReference type="Araport" id="AT3G18910"/>
    </source>
</evidence>
<evidence type="ECO:0000312" key="5">
    <source>
        <dbReference type="EMBL" id="BAB01688.1"/>
    </source>
</evidence>
<accession>Q9LJ74</accession>
<keyword id="KW-1185">Reference proteome</keyword>
<sequence>MKTIQEQLPNDLVEEILCRVPATSLRRLRSTCKAWNRLFKGDRILASKHFEKSAKQFRSLSLRNDYRIFPISFNLHGNSPSLELKSELIDPHSKNSAAPFEISRVIHCEGLLLCSSQLDESRVVVWNPLTGETRWIRTGDFRQKGRSFDVGYYYQKDKRSWIKSYKLLCYYRGTKYFEIYDFDSDSWRILDDIIAPRGSIGYSELSVSLKGNTYWFAKGVTEERPRTISLLKFDFYTEKSVPVLLPYQSRRLFQASSLSVVREDKLSVLLQLDQSSKTEIWVTNVIDETTKGAVSWTKVLALDLSPHLQIGNDGSFFLGEDKKVVMFCEKLIDENKVKDMVYIVGEDNVVTEVGFGVDEMDGCRAVILNYVPSLVQIERAGGNRKRGH</sequence>